<keyword id="KW-0002">3D-structure</keyword>
<keyword id="KW-0071">Autoinducer synthesis</keyword>
<keyword id="KW-0408">Iron</keyword>
<keyword id="KW-0456">Lyase</keyword>
<keyword id="KW-0479">Metal-binding</keyword>
<keyword id="KW-0673">Quorum sensing</keyword>
<feature type="chain" id="PRO_0000172230" description="S-ribosylhomocysteine lyase">
    <location>
        <begin position="1"/>
        <end position="152"/>
    </location>
</feature>
<feature type="binding site">
    <location>
        <position position="55"/>
    </location>
    <ligand>
        <name>Fe cation</name>
        <dbReference type="ChEBI" id="CHEBI:24875"/>
    </ligand>
</feature>
<feature type="binding site">
    <location>
        <position position="59"/>
    </location>
    <ligand>
        <name>Fe cation</name>
        <dbReference type="ChEBI" id="CHEBI:24875"/>
    </ligand>
</feature>
<feature type="binding site">
    <location>
        <position position="122"/>
    </location>
    <ligand>
        <name>Fe cation</name>
        <dbReference type="ChEBI" id="CHEBI:24875"/>
    </ligand>
</feature>
<feature type="helix" evidence="2">
    <location>
        <begin position="6"/>
        <end position="9"/>
    </location>
</feature>
<feature type="strand" evidence="2">
    <location>
        <begin position="17"/>
        <end position="27"/>
    </location>
</feature>
<feature type="strand" evidence="2">
    <location>
        <begin position="33"/>
        <end position="40"/>
    </location>
</feature>
<feature type="turn" evidence="2">
    <location>
        <begin position="44"/>
        <end position="46"/>
    </location>
</feature>
<feature type="helix" evidence="2">
    <location>
        <begin position="51"/>
        <end position="68"/>
    </location>
</feature>
<feature type="strand" evidence="2">
    <location>
        <begin position="72"/>
        <end position="77"/>
    </location>
</feature>
<feature type="strand" evidence="2">
    <location>
        <begin position="81"/>
        <end position="90"/>
    </location>
</feature>
<feature type="helix" evidence="2">
    <location>
        <begin position="94"/>
        <end position="108"/>
    </location>
</feature>
<feature type="turn" evidence="2">
    <location>
        <begin position="119"/>
        <end position="121"/>
    </location>
</feature>
<feature type="turn" evidence="2">
    <location>
        <begin position="123"/>
        <end position="126"/>
    </location>
</feature>
<feature type="helix" evidence="2">
    <location>
        <begin position="130"/>
        <end position="142"/>
    </location>
</feature>
<feature type="helix" evidence="2">
    <location>
        <begin position="144"/>
        <end position="146"/>
    </location>
</feature>
<accession>Q9ZMW8</accession>
<organism>
    <name type="scientific">Helicobacter pylori (strain J99 / ATCC 700824)</name>
    <name type="common">Campylobacter pylori J99</name>
    <dbReference type="NCBI Taxonomy" id="85963"/>
    <lineage>
        <taxon>Bacteria</taxon>
        <taxon>Pseudomonadati</taxon>
        <taxon>Campylobacterota</taxon>
        <taxon>Epsilonproteobacteria</taxon>
        <taxon>Campylobacterales</taxon>
        <taxon>Helicobacteraceae</taxon>
        <taxon>Helicobacter</taxon>
    </lineage>
</organism>
<gene>
    <name type="primary">luxS</name>
    <name type="ordered locus">jhp_0097</name>
</gene>
<dbReference type="EC" id="4.4.1.21"/>
<dbReference type="EMBL" id="AE001439">
    <property type="protein sequence ID" value="AAD05688.1"/>
    <property type="molecule type" value="Genomic_DNA"/>
</dbReference>
<dbReference type="PIR" id="C71973">
    <property type="entry name" value="C71973"/>
</dbReference>
<dbReference type="RefSeq" id="WP_000783567.1">
    <property type="nucleotide sequence ID" value="NC_000921.1"/>
</dbReference>
<dbReference type="PDB" id="1J6X">
    <property type="method" value="X-ray"/>
    <property type="resolution" value="2.38 A"/>
    <property type="chains" value="A/B=1-152"/>
</dbReference>
<dbReference type="PDBsum" id="1J6X"/>
<dbReference type="SMR" id="Q9ZMW8"/>
<dbReference type="KEGG" id="hpj:jhp_0097"/>
<dbReference type="PATRIC" id="fig|85963.30.peg.931"/>
<dbReference type="eggNOG" id="COG1854">
    <property type="taxonomic scope" value="Bacteria"/>
</dbReference>
<dbReference type="BRENDA" id="4.4.1.21">
    <property type="organism ID" value="2604"/>
</dbReference>
<dbReference type="EvolutionaryTrace" id="Q9ZMW8"/>
<dbReference type="Proteomes" id="UP000000804">
    <property type="component" value="Chromosome"/>
</dbReference>
<dbReference type="GO" id="GO:0005506">
    <property type="term" value="F:iron ion binding"/>
    <property type="evidence" value="ECO:0007669"/>
    <property type="project" value="InterPro"/>
</dbReference>
<dbReference type="GO" id="GO:0043768">
    <property type="term" value="F:S-ribosylhomocysteine lyase activity"/>
    <property type="evidence" value="ECO:0007669"/>
    <property type="project" value="UniProtKB-UniRule"/>
</dbReference>
<dbReference type="GO" id="GO:0009372">
    <property type="term" value="P:quorum sensing"/>
    <property type="evidence" value="ECO:0007669"/>
    <property type="project" value="UniProtKB-UniRule"/>
</dbReference>
<dbReference type="Gene3D" id="3.30.1360.80">
    <property type="entry name" value="S-ribosylhomocysteinase (LuxS)"/>
    <property type="match status" value="1"/>
</dbReference>
<dbReference type="HAMAP" id="MF_00091">
    <property type="entry name" value="LuxS"/>
    <property type="match status" value="1"/>
</dbReference>
<dbReference type="InterPro" id="IPR037005">
    <property type="entry name" value="LuxS_sf"/>
</dbReference>
<dbReference type="InterPro" id="IPR011249">
    <property type="entry name" value="Metalloenz_LuxS/M16"/>
</dbReference>
<dbReference type="InterPro" id="IPR003815">
    <property type="entry name" value="S-ribosylhomocysteinase"/>
</dbReference>
<dbReference type="NCBIfam" id="NF002604">
    <property type="entry name" value="PRK02260.1-4"/>
    <property type="match status" value="1"/>
</dbReference>
<dbReference type="PANTHER" id="PTHR35799">
    <property type="entry name" value="S-RIBOSYLHOMOCYSTEINE LYASE"/>
    <property type="match status" value="1"/>
</dbReference>
<dbReference type="PANTHER" id="PTHR35799:SF1">
    <property type="entry name" value="S-RIBOSYLHOMOCYSTEINE LYASE"/>
    <property type="match status" value="1"/>
</dbReference>
<dbReference type="Pfam" id="PF02664">
    <property type="entry name" value="LuxS"/>
    <property type="match status" value="1"/>
</dbReference>
<dbReference type="PIRSF" id="PIRSF006160">
    <property type="entry name" value="AI2"/>
    <property type="match status" value="1"/>
</dbReference>
<dbReference type="PRINTS" id="PR01487">
    <property type="entry name" value="LUXSPROTEIN"/>
</dbReference>
<dbReference type="SUPFAM" id="SSF63411">
    <property type="entry name" value="LuxS/MPP-like metallohydrolase"/>
    <property type="match status" value="1"/>
</dbReference>
<evidence type="ECO:0000305" key="1"/>
<evidence type="ECO:0007829" key="2">
    <source>
        <dbReference type="PDB" id="1J6X"/>
    </source>
</evidence>
<name>LUXS_HELPJ</name>
<sequence length="152" mass="17424">MKMNVESFNLDHTKVKAPYVRIADRKKGVNGDLIVKYDVRFKQPNRDHMDMPSLHSLEHLVAEIIRNHANYVVDWSPMGCQTGFYLTVLNHDNYTEILEVLEKTMQDVLKAKEVPASNEKQCGWAANHTLEGAQNLARAFLDKRAEWSEVGV</sequence>
<comment type="function">
    <text>Involved in the synthesis of autoinducer 2 (AI-2) which is secreted by bacteria and is used to communicate both the cell density and the metabolic potential of the environment. The regulation of gene expression in response to changes in cell density is called quorum sensing. Catalyzes the transformation of S-ribosylhomocysteine (RHC) to homocysteine (HC) and 4,5-dihydroxy-2,3-pentadione (DPD).</text>
</comment>
<comment type="catalytic activity">
    <reaction>
        <text>S-(5-deoxy-D-ribos-5-yl)-L-homocysteine = (S)-4,5-dihydroxypentane-2,3-dione + L-homocysteine</text>
        <dbReference type="Rhea" id="RHEA:17753"/>
        <dbReference type="ChEBI" id="CHEBI:29484"/>
        <dbReference type="ChEBI" id="CHEBI:58195"/>
        <dbReference type="ChEBI" id="CHEBI:58199"/>
        <dbReference type="EC" id="4.4.1.21"/>
    </reaction>
</comment>
<comment type="cofactor">
    <cofactor>
        <name>Fe cation</name>
        <dbReference type="ChEBI" id="CHEBI:24875"/>
    </cofactor>
    <text>Binds 1 Fe cation per subunit.</text>
</comment>
<comment type="subunit">
    <text>Homodimer.</text>
</comment>
<comment type="similarity">
    <text evidence="1">Belongs to the LuxS family.</text>
</comment>
<reference key="1">
    <citation type="journal article" date="1999" name="Nature">
        <title>Genomic sequence comparison of two unrelated isolates of the human gastric pathogen Helicobacter pylori.</title>
        <authorList>
            <person name="Alm R.A."/>
            <person name="Ling L.-S.L."/>
            <person name="Moir D.T."/>
            <person name="King B.L."/>
            <person name="Brown E.D."/>
            <person name="Doig P.C."/>
            <person name="Smith D.R."/>
            <person name="Noonan B."/>
            <person name="Guild B.C."/>
            <person name="deJonge B.L."/>
            <person name="Carmel G."/>
            <person name="Tummino P.J."/>
            <person name="Caruso A."/>
            <person name="Uria-Nickelsen M."/>
            <person name="Mills D.M."/>
            <person name="Ives C."/>
            <person name="Gibson R."/>
            <person name="Merberg D."/>
            <person name="Mills S.D."/>
            <person name="Jiang Q."/>
            <person name="Taylor D.E."/>
            <person name="Vovis G.F."/>
            <person name="Trust T.J."/>
        </authorList>
    </citation>
    <scope>NUCLEOTIDE SEQUENCE [LARGE SCALE GENOMIC DNA]</scope>
    <source>
        <strain>J99 / ATCC 700824</strain>
    </source>
</reference>
<reference key="2">
    <citation type="journal article" date="2001" name="Structure">
        <title>A structural genomics approach to the study of quorum sensing: crystal structures of three LuxS orthologs.</title>
        <authorList>
            <person name="Lewis H.A."/>
            <person name="Furlong E.B."/>
            <person name="Laubert B."/>
            <person name="Eroshkina G.A."/>
            <person name="Batiyenko Y."/>
            <person name="Adams J.M."/>
            <person name="Bergseid M.G."/>
            <person name="Marsh C.D."/>
            <person name="Peat T.S."/>
            <person name="Sanderson W.E."/>
            <person name="Sauder J.M."/>
            <person name="Buchanan S.G."/>
        </authorList>
    </citation>
    <scope>X-RAY CRYSTALLOGRAPHY (2.38 ANGSTROMS)</scope>
</reference>
<proteinExistence type="evidence at protein level"/>
<protein>
    <recommendedName>
        <fullName>S-ribosylhomocysteine lyase</fullName>
        <ecNumber>4.4.1.21</ecNumber>
    </recommendedName>
    <alternativeName>
        <fullName>AI-2 synthesis protein</fullName>
    </alternativeName>
    <alternativeName>
        <fullName>Autoinducer-2 production protein LuxS</fullName>
    </alternativeName>
</protein>